<feature type="chain" id="PRO_0000222444" description="RNA-directed RNA polymerase">
    <location>
        <begin position="1"/>
        <end position="998"/>
    </location>
</feature>
<feature type="transmembrane region" description="Helical" evidence="2">
    <location>
        <begin position="17"/>
        <end position="34"/>
    </location>
</feature>
<feature type="region of interest" description="Cytoplasmic" evidence="1">
    <location>
        <begin position="35"/>
        <end position="998"/>
    </location>
</feature>
<feature type="region of interest" description="Capping" evidence="1">
    <location>
        <begin position="91"/>
        <end position="282"/>
    </location>
</feature>
<feature type="region of interest" description="Disordered" evidence="3">
    <location>
        <begin position="901"/>
        <end position="998"/>
    </location>
</feature>
<feature type="compositionally biased region" description="Polar residues" evidence="3">
    <location>
        <begin position="904"/>
        <end position="913"/>
    </location>
</feature>
<feature type="compositionally biased region" description="Polar residues" evidence="3">
    <location>
        <begin position="947"/>
        <end position="961"/>
    </location>
</feature>
<feature type="compositionally biased region" description="Basic residues" evidence="3">
    <location>
        <begin position="971"/>
        <end position="984"/>
    </location>
</feature>
<feature type="active site" description="For RdRp/TNTase activity" evidence="1">
    <location>
        <position position="692"/>
    </location>
</feature>
<protein>
    <recommendedName>
        <fullName>RNA-directed RNA polymerase</fullName>
        <shortName>RdRp</shortName>
        <ecNumber evidence="1">2.7.7.48</ecNumber>
    </recommendedName>
    <alternativeName>
        <fullName>RNA replicase</fullName>
        <shortName>Protein A</shortName>
    </alternativeName>
</protein>
<comment type="function">
    <text evidence="1">RNA-dependent RNA polymerase, which replicates the viral genome composed of 2 RNA segments, RNA1 and RNA2. Does not need an exogenous primer. Also possesses a terminal nucleotidyl transferase (TNTase) activity. The TNTase catalyzes the addition of nucleotide to the 3'-end of plus- and minus-stranded RNAs, probably to repair the 3'-end nucleotide loss. Forms the open necked connection to the cytosol of the virus-induced replication vesicles. Mediates viral RNA1 recruitment.</text>
</comment>
<comment type="catalytic activity">
    <reaction evidence="1">
        <text>RNA(n) + a ribonucleoside 5'-triphosphate = RNA(n+1) + diphosphate</text>
        <dbReference type="Rhea" id="RHEA:21248"/>
        <dbReference type="Rhea" id="RHEA-COMP:14527"/>
        <dbReference type="Rhea" id="RHEA-COMP:17342"/>
        <dbReference type="ChEBI" id="CHEBI:33019"/>
        <dbReference type="ChEBI" id="CHEBI:61557"/>
        <dbReference type="ChEBI" id="CHEBI:140395"/>
        <dbReference type="EC" id="2.7.7.48"/>
    </reaction>
    <physiologicalReaction direction="left-to-right" evidence="1">
        <dbReference type="Rhea" id="RHEA:21249"/>
    </physiologicalReaction>
</comment>
<comment type="cofactor">
    <cofactor evidence="1">
        <name>Mn(2+)</name>
        <dbReference type="ChEBI" id="CHEBI:29035"/>
    </cofactor>
    <text evidence="1">For RdRP activity.</text>
</comment>
<comment type="activity regulation">
    <text evidence="1">Drastically inhibited by phosphonoacetic acid. Only slightly inhibited by gliotoxin.</text>
</comment>
<comment type="subunit">
    <text evidence="1">Homododecamer. Forms 2 stacked rings of 35-nm in diameter, arranged in a crown-like structure at the opening of virus-induced replication vesicles. Interacts with protein B2.</text>
</comment>
<comment type="subcellular location">
    <subcellularLocation>
        <location evidence="1">Host mitochondrion outer membrane</location>
        <topology evidence="1">Single-pass membrane protein</topology>
    </subcellularLocation>
    <text evidence="1">Part of the 30- to 90-nm invaginations of the host mitochondrial outer membrane that form the viral replication complexes vesicules. Has a N-terminal membrane-spanning mitochondrial anchor.</text>
</comment>
<comment type="domain">
    <text evidence="1">The N-terminus is important for both membrane association and mitochondrial localization. It may also contain a RNA methyltransferase (MTase-GTase) capping domain. The C-terminus contains the RNA-dependent RNA polymerase domain and a structurally disordered region at the very end.</text>
</comment>
<comment type="miscellaneous">
    <text evidence="1">The viral bipartite genome is composed of RNA1 and RNA2.</text>
</comment>
<comment type="similarity">
    <text evidence="4">Belongs to the nodaviridae RNA polymerase family.</text>
</comment>
<sequence>MTLKVILGEHQITRTELPVGIATVSGCGAVVYCISKFWGYGAIAPYPQSGGNRVTRALQRAVIDKTKTPIETRFYPLDSLRTVTPKRAVDNGHAVSGAVRDAARRLIDESITAVGGSKFEVNPNPNSSTGLRNHFHFAVGDLAQDFRNDTPADDAFIVGVDVDYYVTEPDVLLEHMRPVVLHTFNPKKVSGFDADSPFTIKNNLVEYKVSGGAAWVHPVWDWCEAGEFIASRVRTSWKEWFLQLPLRMIGLEKVGYHKIHHCRPWTDCPDRALVYTIPQYVIWRFNWIDTELHVRKLKRIEYQDETKPGWNRLEYVTDRNELLVSIGREGEHAQITIEKEKLDMLSGLSATQSVNVRLIGMGHKDPQYTSMIVQYYTGKKVVSPISPTVYKPTMPRVHWPVTSDADVPEVSARQYTLPIVSDCMMMPMIKRWETMSESIERRVTFVANDKKPSDRIAKIAETFVKLMNGPFKDLDPLSIEETIERLNKPSQQLQLRAVFEMIGVEPRQLIESFNKNEPGMKSSRIISGFPDILFILKVSRYTLAYSDIVLHAEHNEHWYYPGRNPTEIADGVCEFVSECDAEVIETDFSNLDGRVSSWMQRNIAQKAMVQAFRPEYRDEIISFMDTIINCSAKAKRFGFRYEPGVGVKSGSSTTTPHNTQYNGCVEFTALTFEHPDAEPEDLFRLIGPKCGDDGLSRAIIQKSINRAAKCFGLELKVERYNPEIGLCFLSRVFVDPLATTTTIQDPLRTLRKLHLTTRDPTIPLADAACDRVEGHLCTDALTPLISDYCKMVLRLYGPTASTEQVRNQRRSRNKEKPYWLTCDGSWPQHPQDAHLMKQVLIKRTAIDEDQVDALIGRFAAMKDVWEKITHDSEESAAACTFDEDGVAPNSVDESLPMLNDAKQTRANPGTSRPHSNGGGSSHGNELPRRTEQRAQGPRQPARLPKQGKTNGKSDGNITAGETQRGGIPRGKGPRGGKTNTRRTPPKAGAQPQPSNNRK</sequence>
<reference key="1">
    <citation type="journal article" date="1985" name="J. Mol. Biol.">
        <title>Structure of the black beetle virus genome and its functional implications.</title>
        <authorList>
            <person name="Dasmahapatra B."/>
            <person name="Dasgupta R."/>
            <person name="Ghosh A."/>
            <person name="Kaesberg P."/>
        </authorList>
    </citation>
    <scope>NUCLEOTIDE SEQUENCE [GENOMIC RNA]</scope>
</reference>
<reference key="2">
    <citation type="journal article" date="1984" name="Virology">
        <title>Sequence of the black beetle virus subgenomic RNA and its location in the viral genome.</title>
        <authorList>
            <person name="Guarino L.A."/>
            <person name="Ghosh A."/>
            <person name="Dasmahapatra B."/>
            <person name="Dasgupta R."/>
            <person name="Kaesberg P."/>
        </authorList>
    </citation>
    <scope>PRELIMINARY PARTIAL NUCLEOTIDE SEQUENCE</scope>
</reference>
<keyword id="KW-1043">Host membrane</keyword>
<keyword id="KW-1045">Host mitochondrion</keyword>
<keyword id="KW-1047">Host mitochondrion outer membrane</keyword>
<keyword id="KW-0472">Membrane</keyword>
<keyword id="KW-0548">Nucleotidyltransferase</keyword>
<keyword id="KW-0696">RNA-directed RNA polymerase</keyword>
<keyword id="KW-0808">Transferase</keyword>
<keyword id="KW-0812">Transmembrane</keyword>
<keyword id="KW-1133">Transmembrane helix</keyword>
<organismHost>
    <name type="scientific">Heteronychus arator</name>
    <name type="common">African black beetle</name>
    <dbReference type="NCBI Taxonomy" id="295550"/>
</organismHost>
<evidence type="ECO:0000250" key="1">
    <source>
        <dbReference type="UniProtKB" id="Q66929"/>
    </source>
</evidence>
<evidence type="ECO:0000255" key="2"/>
<evidence type="ECO:0000256" key="3">
    <source>
        <dbReference type="SAM" id="MobiDB-lite"/>
    </source>
</evidence>
<evidence type="ECO:0000305" key="4"/>
<dbReference type="EC" id="2.7.7.48" evidence="1"/>
<dbReference type="EMBL" id="X02396">
    <property type="protein sequence ID" value="CAA26238.1"/>
    <property type="molecule type" value="Genomic_RNA"/>
</dbReference>
<dbReference type="PIR" id="S78471">
    <property type="entry name" value="QQBBB1"/>
</dbReference>
<dbReference type="RefSeq" id="YP_053043.1">
    <property type="nucleotide sequence ID" value="NC_001411.2"/>
</dbReference>
<dbReference type="SMR" id="Q96631"/>
<dbReference type="GeneID" id="956649"/>
<dbReference type="KEGG" id="vg:956649"/>
<dbReference type="OrthoDB" id="155at10239"/>
<dbReference type="Proteomes" id="UP000203003">
    <property type="component" value="Genome"/>
</dbReference>
<dbReference type="GO" id="GO:0044193">
    <property type="term" value="C:host cell mitochondrial outer membrane"/>
    <property type="evidence" value="ECO:0007669"/>
    <property type="project" value="UniProtKB-SubCell"/>
</dbReference>
<dbReference type="GO" id="GO:0016020">
    <property type="term" value="C:membrane"/>
    <property type="evidence" value="ECO:0007669"/>
    <property type="project" value="UniProtKB-KW"/>
</dbReference>
<dbReference type="GO" id="GO:0003968">
    <property type="term" value="F:RNA-directed RNA polymerase activity"/>
    <property type="evidence" value="ECO:0007669"/>
    <property type="project" value="UniProtKB-KW"/>
</dbReference>
<dbReference type="CDD" id="cd23173">
    <property type="entry name" value="ps-ssRNAv_Nodaviridae_RdRp"/>
    <property type="match status" value="1"/>
</dbReference>
<dbReference type="InterPro" id="IPR043502">
    <property type="entry name" value="DNA/RNA_pol_sf"/>
</dbReference>
<dbReference type="InterPro" id="IPR043647">
    <property type="entry name" value="Noda_Vmethyltr_dom"/>
</dbReference>
<dbReference type="Pfam" id="PF19222">
    <property type="entry name" value="Noda_Vmethyltr"/>
    <property type="match status" value="1"/>
</dbReference>
<dbReference type="SUPFAM" id="SSF56672">
    <property type="entry name" value="DNA/RNA polymerases"/>
    <property type="match status" value="1"/>
</dbReference>
<proteinExistence type="inferred from homology"/>
<name>RDRP_BBV</name>
<accession>Q96631</accession>
<organism>
    <name type="scientific">Black beetle virus</name>
    <name type="common">BBV</name>
    <dbReference type="NCBI Taxonomy" id="12285"/>
    <lineage>
        <taxon>Viruses</taxon>
        <taxon>Riboviria</taxon>
        <taxon>Orthornavirae</taxon>
        <taxon>Kitrinoviricota</taxon>
        <taxon>Magsaviricetes</taxon>
        <taxon>Nodamuvirales</taxon>
        <taxon>Nodaviridae</taxon>
        <taxon>Alphanodavirus</taxon>
    </lineage>
</organism>